<comment type="function">
    <text evidence="1 5 6">Stores iron in a soluble, non-toxic, readily available form (By similarity). Important for iron homeostasis (By similarity). Has ferroxidase activity (By similarity). Iron is taken up in the ferrous form and deposited as ferric hydroxides after oxidation (By similarity). Also plays a role in delivery of iron to cells (PubMed:19154717). Mediates iron uptake in capsule cells of the developing kidney (PubMed:19154717). Degraded to release iron upon autophagy activation by nutrient starvation (PubMed:25327288).</text>
</comment>
<comment type="catalytic activity">
    <reaction evidence="1">
        <text>4 Fe(2+) + O2 + 4 H(+) = 4 Fe(3+) + 2 H2O</text>
        <dbReference type="Rhea" id="RHEA:11148"/>
        <dbReference type="ChEBI" id="CHEBI:15377"/>
        <dbReference type="ChEBI" id="CHEBI:15378"/>
        <dbReference type="ChEBI" id="CHEBI:15379"/>
        <dbReference type="ChEBI" id="CHEBI:29033"/>
        <dbReference type="ChEBI" id="CHEBI:29034"/>
        <dbReference type="EC" id="1.16.3.1"/>
    </reaction>
</comment>
<comment type="subunit">
    <text evidence="1 6">Oligomer of 24 subunits. There are two types of subunits: L (light) chain and H (heavy) chain. The major chain can be light or heavy, depending on the species and tissue type. The functional molecule forms a roughly spherical shell with a diameter of 12 nm and contains a central cavity into which the insoluble mineral iron core is deposited. Interacts with NCOA4; NCOA4 promotes targeting of the iron-binding ferritin complex to autolysosomes following starvation or iron depletion (PubMed:25327288).</text>
</comment>
<comment type="interaction">
    <interactant intactId="EBI-308950">
        <id>P09528</id>
    </interactant>
    <interactant intactId="EBI-308950">
        <id>P09528</id>
        <label>Fth1</label>
    </interactant>
    <organismsDiffer>false</organismsDiffer>
    <experiments>3</experiments>
</comment>
<comment type="subcellular location">
    <subcellularLocation>
        <location evidence="6">Cytoplasm</location>
    </subcellularLocation>
    <subcellularLocation>
        <location evidence="6">Cytoplasmic vesicle</location>
        <location evidence="6">Autophagosome</location>
    </subcellularLocation>
    <subcellularLocation>
        <location evidence="6">Autolysosome</location>
    </subcellularLocation>
</comment>
<comment type="developmental stage">
    <text evidence="3">At 9.5 dpc, detected at low levels in the developing heart and central nervous system. At later stages of development, widely expressed, predominantly in the heart and brown fat tissue.</text>
</comment>
<comment type="disruption phenotype">
    <text evidence="3 4">Homozygous mutant embryos die in utero between 3.5 and 9.5 dpc (PubMed:10652280). Heterozygous animals are healthy and fertile and do not present any apparent abnormalities. They show slightly elevated tissue light chain ferritin content and 7- to 10-fold more light chain ferritin in the serum than normal mice, but their serum iron remains unchanged.</text>
</comment>
<comment type="similarity">
    <text evidence="7">Belongs to the ferritin family.</text>
</comment>
<proteinExistence type="evidence at protein level"/>
<organism>
    <name type="scientific">Mus musculus</name>
    <name type="common">Mouse</name>
    <dbReference type="NCBI Taxonomy" id="10090"/>
    <lineage>
        <taxon>Eukaryota</taxon>
        <taxon>Metazoa</taxon>
        <taxon>Chordata</taxon>
        <taxon>Craniata</taxon>
        <taxon>Vertebrata</taxon>
        <taxon>Euteleostomi</taxon>
        <taxon>Mammalia</taxon>
        <taxon>Eutheria</taxon>
        <taxon>Euarchontoglires</taxon>
        <taxon>Glires</taxon>
        <taxon>Rodentia</taxon>
        <taxon>Myomorpha</taxon>
        <taxon>Muroidea</taxon>
        <taxon>Muridae</taxon>
        <taxon>Murinae</taxon>
        <taxon>Mus</taxon>
        <taxon>Mus</taxon>
    </lineage>
</organism>
<dbReference type="EC" id="1.16.3.1" evidence="1"/>
<dbReference type="EMBL" id="X52561">
    <property type="protein sequence ID" value="CAA36795.1"/>
    <property type="molecule type" value="Genomic_DNA"/>
</dbReference>
<dbReference type="EMBL" id="X12812">
    <property type="protein sequence ID" value="CAA31300.1"/>
    <property type="molecule type" value="mRNA"/>
</dbReference>
<dbReference type="EMBL" id="J03941">
    <property type="protein sequence ID" value="AAA37611.1"/>
    <property type="molecule type" value="mRNA"/>
</dbReference>
<dbReference type="EMBL" id="M60170">
    <property type="protein sequence ID" value="AAA37613.1"/>
    <property type="molecule type" value="Genomic_DNA"/>
</dbReference>
<dbReference type="EMBL" id="M24509">
    <property type="protein sequence ID" value="AAA37612.1"/>
    <property type="molecule type" value="mRNA"/>
</dbReference>
<dbReference type="EMBL" id="AK027998">
    <property type="protein sequence ID" value="BAC25694.1"/>
    <property type="molecule type" value="mRNA"/>
</dbReference>
<dbReference type="EMBL" id="AK139622">
    <property type="protein sequence ID" value="BAE24084.1"/>
    <property type="molecule type" value="mRNA"/>
</dbReference>
<dbReference type="EMBL" id="AK147082">
    <property type="protein sequence ID" value="BAE27662.1"/>
    <property type="molecule type" value="mRNA"/>
</dbReference>
<dbReference type="EMBL" id="AK150262">
    <property type="protein sequence ID" value="BAE29419.1"/>
    <property type="molecule type" value="mRNA"/>
</dbReference>
<dbReference type="EMBL" id="AK150508">
    <property type="protein sequence ID" value="BAE29621.1"/>
    <property type="molecule type" value="mRNA"/>
</dbReference>
<dbReference type="EMBL" id="AK150628">
    <property type="protein sequence ID" value="BAE29718.1"/>
    <property type="molecule type" value="mRNA"/>
</dbReference>
<dbReference type="EMBL" id="AK150679">
    <property type="protein sequence ID" value="BAE29759.1"/>
    <property type="molecule type" value="mRNA"/>
</dbReference>
<dbReference type="EMBL" id="AK150693">
    <property type="protein sequence ID" value="BAE29772.1"/>
    <property type="molecule type" value="mRNA"/>
</dbReference>
<dbReference type="EMBL" id="AK151192">
    <property type="protein sequence ID" value="BAE30189.1"/>
    <property type="molecule type" value="mRNA"/>
</dbReference>
<dbReference type="EMBL" id="AK151241">
    <property type="protein sequence ID" value="BAE30233.1"/>
    <property type="molecule type" value="mRNA"/>
</dbReference>
<dbReference type="EMBL" id="AK151399">
    <property type="protein sequence ID" value="BAE30367.1"/>
    <property type="molecule type" value="mRNA"/>
</dbReference>
<dbReference type="EMBL" id="AK151609">
    <property type="protein sequence ID" value="BAE30548.1"/>
    <property type="molecule type" value="mRNA"/>
</dbReference>
<dbReference type="EMBL" id="AK151675">
    <property type="protein sequence ID" value="BAE30600.1"/>
    <property type="molecule type" value="mRNA"/>
</dbReference>
<dbReference type="EMBL" id="AK152071">
    <property type="protein sequence ID" value="BAE30924.1"/>
    <property type="molecule type" value="mRNA"/>
</dbReference>
<dbReference type="EMBL" id="AK152542">
    <property type="protein sequence ID" value="BAE31297.1"/>
    <property type="molecule type" value="mRNA"/>
</dbReference>
<dbReference type="EMBL" id="AK152702">
    <property type="protein sequence ID" value="BAE31431.1"/>
    <property type="molecule type" value="mRNA"/>
</dbReference>
<dbReference type="EMBL" id="AK153017">
    <property type="protein sequence ID" value="BAE31651.1"/>
    <property type="molecule type" value="mRNA"/>
</dbReference>
<dbReference type="EMBL" id="AK153195">
    <property type="protein sequence ID" value="BAE31795.1"/>
    <property type="molecule type" value="mRNA"/>
</dbReference>
<dbReference type="EMBL" id="AK153199">
    <property type="protein sequence ID" value="BAE31799.1"/>
    <property type="molecule type" value="mRNA"/>
</dbReference>
<dbReference type="EMBL" id="AK159243">
    <property type="protein sequence ID" value="BAE34925.1"/>
    <property type="molecule type" value="mRNA"/>
</dbReference>
<dbReference type="EMBL" id="AK168601">
    <property type="protein sequence ID" value="BAE40468.1"/>
    <property type="molecule type" value="mRNA"/>
</dbReference>
<dbReference type="EMBL" id="AK169004">
    <property type="protein sequence ID" value="BAE40803.1"/>
    <property type="molecule type" value="mRNA"/>
</dbReference>
<dbReference type="EMBL" id="BC012314">
    <property type="protein sequence ID" value="AAH12314.1"/>
    <property type="molecule type" value="mRNA"/>
</dbReference>
<dbReference type="CCDS" id="CCDS29567.1"/>
<dbReference type="PIR" id="S06070">
    <property type="entry name" value="S06070"/>
</dbReference>
<dbReference type="RefSeq" id="NP_034369.1">
    <property type="nucleotide sequence ID" value="NM_010239.2"/>
</dbReference>
<dbReference type="PDB" id="3WNW">
    <property type="method" value="X-ray"/>
    <property type="resolution" value="2.24 A"/>
    <property type="chains" value="A/B/C/D/E/F/G/H/I/J/K/L=1-182"/>
</dbReference>
<dbReference type="PDB" id="5OBA">
    <property type="method" value="X-ray"/>
    <property type="resolution" value="2.85 A"/>
    <property type="chains" value="A/B/C/D/E/F/G/H/I/J/K/L/M/N/O/P/Q/R/S/T/U/V/W/X=1-177"/>
</dbReference>
<dbReference type="PDB" id="5OBB">
    <property type="method" value="X-ray"/>
    <property type="resolution" value="2.65 A"/>
    <property type="chains" value="A/B/C/D/E/F/G/H/I/J/K/L/M/N/O/P/Q/R/S/T/U/V/W/X=1-177"/>
</dbReference>
<dbReference type="PDB" id="6S61">
    <property type="method" value="EM"/>
    <property type="resolution" value="1.84 A"/>
    <property type="chains" value="A/B/C/D/E/F/G/H/I/J/K/L/M/N/O/P/Q/R/S/T/U/V/W/X=1-182"/>
</dbReference>
<dbReference type="PDB" id="6SHT">
    <property type="method" value="EM"/>
    <property type="resolution" value="2.73 A"/>
    <property type="chains" value="A=1-182"/>
</dbReference>
<dbReference type="PDB" id="6V21">
    <property type="method" value="EM"/>
    <property type="resolution" value="1.75 A"/>
    <property type="chains" value="A/B/C/D/E/F/G/H/I/J/K/L/M/N/O/P/Q/R/S/T/U/V/W/X=5-178"/>
</dbReference>
<dbReference type="PDB" id="7A4M">
    <property type="method" value="EM"/>
    <property type="resolution" value="1.22 A"/>
    <property type="chains" value="A=6-177"/>
</dbReference>
<dbReference type="PDB" id="7KOD">
    <property type="method" value="EM"/>
    <property type="resolution" value="1.66 A"/>
    <property type="chains" value="A/B/C/D/E/F/G/H/I/J/K/L/M/N/O/P/Q/R/S/T/U/V/W/X=1-182"/>
</dbReference>
<dbReference type="PDB" id="7TB3">
    <property type="method" value="EM"/>
    <property type="resolution" value="2.57 A"/>
    <property type="chains" value="A/B/C/D/E/F/G/H/I/J/K/L/M/N/O/P/Q/R/S/T/U/V/W/X=7-182"/>
</dbReference>
<dbReference type="PDB" id="7TBH">
    <property type="method" value="EM"/>
    <property type="resolution" value="2.30 A"/>
    <property type="chains" value="A/B/C/D/E/F/G/H/I/J/K/L/M/N/O/P/Q/R/S/T/U/V/W/X=7-182"/>
</dbReference>
<dbReference type="PDB" id="8BK9">
    <property type="method" value="EM"/>
    <property type="resolution" value="2.10 A"/>
    <property type="chains" value="A/B/C/D/E/F/G/H/I/J/K/L/M/N/O/P/Q/R/S/T/V/W/X/Y=1-182"/>
</dbReference>
<dbReference type="PDB" id="8BKA">
    <property type="method" value="EM"/>
    <property type="resolution" value="2.70 A"/>
    <property type="chains" value="A/B/C/D/E/F/G/H/I/J/K/L/M/N/O/P/Q/R/S/T/V/W/X/Y=1-182"/>
</dbReference>
<dbReference type="PDB" id="8BKB">
    <property type="method" value="EM"/>
    <property type="resolution" value="2.20 A"/>
    <property type="chains" value="A/B/C/D/E/F/G/H/I/J/K/L/M/N/O/P/Q/R/S/T/V/W/X/Y=1-182"/>
</dbReference>
<dbReference type="PDB" id="8EMQ">
    <property type="method" value="EM"/>
    <property type="resolution" value="1.66 A"/>
    <property type="chains" value="A/B/C/D/E/F/G/H/I/J/K/L/M/N/O/P/Q/R/S/T/U/V/W/X=6-177"/>
</dbReference>
<dbReference type="PDB" id="8EN7">
    <property type="method" value="EM"/>
    <property type="resolution" value="1.68 A"/>
    <property type="chains" value="A/B/C/D/E/F/G/H/I/J/K/L/M/N/O/P/Q/R/S/T/U/V/W/X=6-177"/>
</dbReference>
<dbReference type="PDB" id="8J5A">
    <property type="method" value="EM"/>
    <property type="resolution" value="1.19 A"/>
    <property type="chains" value="A=6-177"/>
</dbReference>
<dbReference type="PDB" id="8PVC">
    <property type="method" value="EM"/>
    <property type="resolution" value="2.60 A"/>
    <property type="chains" value="A=1-182"/>
</dbReference>
<dbReference type="PDB" id="8RQB">
    <property type="method" value="EM"/>
    <property type="resolution" value="1.09 A"/>
    <property type="chains" value="A/B/C/D/E/F/G/H/I/J/K/L/M/N/O/P/Q/R/S/T/U/V/W/X=6-177"/>
</dbReference>
<dbReference type="PDB" id="8T4Q">
    <property type="method" value="EM"/>
    <property type="resolution" value="2.07 A"/>
    <property type="chains" value="A/B/C/D/E/F/G/H/I/J/K/L/M/N/O/P/Q/R/S/T/U/V/W/X=6-177"/>
</dbReference>
<dbReference type="PDB" id="8TU7">
    <property type="method" value="EM"/>
    <property type="resolution" value="2.50 A"/>
    <property type="chains" value="A/B/C/D/E/F/G/H/I/J/K/L/M/N/O/P/Q/R/S/T/U/V/W/X=1-182"/>
</dbReference>
<dbReference type="PDB" id="8TU8">
    <property type="method" value="EM"/>
    <property type="resolution" value="2.10 A"/>
    <property type="chains" value="A/B/C/D/E/F/G/H/I/J/K/L/M/N/O/P/Q/R/S/T/U/V/W/X=1-182"/>
</dbReference>
<dbReference type="PDB" id="8TUE">
    <property type="method" value="EM"/>
    <property type="resolution" value="2.10 A"/>
    <property type="chains" value="A/B/C/D/E/F/G/H/I/J/K/L/M/N/O/P/Q/R/S/T/U/V/W/X=1-182"/>
</dbReference>
<dbReference type="PDB" id="9IUY">
    <property type="method" value="EM"/>
    <property type="resolution" value="1.51 A"/>
    <property type="chains" value="A/B/C/D/E/F/G/H/I/J/K/L/M/N/O/P/Q/R/S/T/U/V/W/X=1-182"/>
</dbReference>
<dbReference type="PDBsum" id="3WNW"/>
<dbReference type="PDBsum" id="5OBA"/>
<dbReference type="PDBsum" id="5OBB"/>
<dbReference type="PDBsum" id="6S61"/>
<dbReference type="PDBsum" id="6SHT"/>
<dbReference type="PDBsum" id="6V21"/>
<dbReference type="PDBsum" id="7A4M"/>
<dbReference type="PDBsum" id="7KOD"/>
<dbReference type="PDBsum" id="7TB3"/>
<dbReference type="PDBsum" id="7TBH"/>
<dbReference type="PDBsum" id="8BK9"/>
<dbReference type="PDBsum" id="8BKA"/>
<dbReference type="PDBsum" id="8BKB"/>
<dbReference type="PDBsum" id="8EMQ"/>
<dbReference type="PDBsum" id="8EN7"/>
<dbReference type="PDBsum" id="8J5A"/>
<dbReference type="PDBsum" id="8PVC"/>
<dbReference type="PDBsum" id="8RQB"/>
<dbReference type="PDBsum" id="8T4Q"/>
<dbReference type="PDBsum" id="8TU7"/>
<dbReference type="PDBsum" id="8TU8"/>
<dbReference type="PDBsum" id="8TUE"/>
<dbReference type="PDBsum" id="9IUY"/>
<dbReference type="EMDB" id="EMD-10101"/>
<dbReference type="EMDB" id="EMD-10205"/>
<dbReference type="EMDB" id="EMD-10675"/>
<dbReference type="EMDB" id="EMD-11638"/>
<dbReference type="EMDB" id="EMD-12358"/>
<dbReference type="EMDB" id="EMD-16093"/>
<dbReference type="EMDB" id="EMD-16094"/>
<dbReference type="EMDB" id="EMD-16095"/>
<dbReference type="EMDB" id="EMD-17961"/>
<dbReference type="EMDB" id="EMD-17995"/>
<dbReference type="EMDB" id="EMD-19436"/>
<dbReference type="EMDB" id="EMD-21024"/>
<dbReference type="EMDB" id="EMD-22972"/>
<dbReference type="EMDB" id="EMD-24795"/>
<dbReference type="EMDB" id="EMD-24796"/>
<dbReference type="EMDB" id="EMD-24797"/>
<dbReference type="EMDB" id="EMD-25791"/>
<dbReference type="EMDB" id="EMD-25799"/>
<dbReference type="EMDB" id="EMD-28259"/>
<dbReference type="EMDB" id="EMD-28269"/>
<dbReference type="EMDB" id="EMD-31314"/>
<dbReference type="EMDB" id="EMD-33707"/>
<dbReference type="EMDB" id="EMD-35981"/>
<dbReference type="EMDB" id="EMD-35984"/>
<dbReference type="EMDB" id="EMD-41038"/>
<dbReference type="EMDB" id="EMD-41618"/>
<dbReference type="EMDB" id="EMD-41619"/>
<dbReference type="EMDB" id="EMD-41622"/>
<dbReference type="EMDB" id="EMD-43527"/>
<dbReference type="EMDB" id="EMD-49574"/>
<dbReference type="EMDB" id="EMD-60915"/>
<dbReference type="EMDB" id="EMD-9914"/>
<dbReference type="SMR" id="P09528"/>
<dbReference type="BioGRID" id="199755">
    <property type="interactions" value="14"/>
</dbReference>
<dbReference type="FunCoup" id="P09528">
    <property type="interactions" value="577"/>
</dbReference>
<dbReference type="IntAct" id="P09528">
    <property type="interactions" value="5"/>
</dbReference>
<dbReference type="MINT" id="P09528"/>
<dbReference type="STRING" id="10090.ENSMUSP00000158539"/>
<dbReference type="GlyGen" id="P09528">
    <property type="glycosylation" value="2 sites, 1 N-linked glycan (1 site), 1 O-linked glycan (1 site)"/>
</dbReference>
<dbReference type="iPTMnet" id="P09528"/>
<dbReference type="MetOSite" id="P09528"/>
<dbReference type="PhosphoSitePlus" id="P09528"/>
<dbReference type="SwissPalm" id="P09528"/>
<dbReference type="REPRODUCTION-2DPAGE" id="P09528"/>
<dbReference type="CPTAC" id="non-CPTAC-3809"/>
<dbReference type="jPOST" id="P09528"/>
<dbReference type="PaxDb" id="10090-ENSMUSP00000025563"/>
<dbReference type="PeptideAtlas" id="P09528"/>
<dbReference type="ProteomicsDB" id="271802"/>
<dbReference type="Pumba" id="P09528"/>
<dbReference type="Antibodypedia" id="28385">
    <property type="antibodies" value="884 antibodies from 41 providers"/>
</dbReference>
<dbReference type="DNASU" id="14319"/>
<dbReference type="Ensembl" id="ENSMUST00000025563.8">
    <property type="protein sequence ID" value="ENSMUSP00000025563.7"/>
    <property type="gene ID" value="ENSMUSG00000024661.8"/>
</dbReference>
<dbReference type="Ensembl" id="ENSMUST00000235196.2">
    <property type="protein sequence ID" value="ENSMUSP00000158539.2"/>
    <property type="gene ID" value="ENSMUSG00000024661.8"/>
</dbReference>
<dbReference type="GeneID" id="14319"/>
<dbReference type="KEGG" id="mmu:14319"/>
<dbReference type="UCSC" id="uc008got.2">
    <property type="organism name" value="mouse"/>
</dbReference>
<dbReference type="AGR" id="MGI:95588"/>
<dbReference type="CTD" id="2495"/>
<dbReference type="MGI" id="MGI:95588">
    <property type="gene designation" value="Fth1"/>
</dbReference>
<dbReference type="VEuPathDB" id="HostDB:ENSMUSG00000024661"/>
<dbReference type="eggNOG" id="KOG2332">
    <property type="taxonomic scope" value="Eukaryota"/>
</dbReference>
<dbReference type="GeneTree" id="ENSGT00950000182841"/>
<dbReference type="HOGENOM" id="CLU_065681_4_0_1"/>
<dbReference type="InParanoid" id="P09528"/>
<dbReference type="OMA" id="HEGKMAQ"/>
<dbReference type="OrthoDB" id="186462at2759"/>
<dbReference type="PhylomeDB" id="P09528"/>
<dbReference type="TreeFam" id="TF313885"/>
<dbReference type="Reactome" id="R-MMU-432722">
    <property type="pathway name" value="Golgi Associated Vesicle Biogenesis"/>
</dbReference>
<dbReference type="Reactome" id="R-MMU-6798695">
    <property type="pathway name" value="Neutrophil degranulation"/>
</dbReference>
<dbReference type="Reactome" id="R-MMU-917937">
    <property type="pathway name" value="Iron uptake and transport"/>
</dbReference>
<dbReference type="BioGRID-ORCS" id="14319">
    <property type="hits" value="3 hits in 75 CRISPR screens"/>
</dbReference>
<dbReference type="ChiTaRS" id="Fth1">
    <property type="organism name" value="mouse"/>
</dbReference>
<dbReference type="EvolutionaryTrace" id="P09528"/>
<dbReference type="PRO" id="PR:P09528"/>
<dbReference type="Proteomes" id="UP000000589">
    <property type="component" value="Chromosome 19"/>
</dbReference>
<dbReference type="RNAct" id="P09528">
    <property type="molecule type" value="protein"/>
</dbReference>
<dbReference type="Bgee" id="ENSMUSG00000024661">
    <property type="expression patterns" value="Expressed in globus pallidus and 278 other cell types or tissues"/>
</dbReference>
<dbReference type="ExpressionAtlas" id="P09528">
    <property type="expression patterns" value="baseline and differential"/>
</dbReference>
<dbReference type="GO" id="GO:0044754">
    <property type="term" value="C:autolysosome"/>
    <property type="evidence" value="ECO:0000266"/>
    <property type="project" value="MGI"/>
</dbReference>
<dbReference type="GO" id="GO:0005776">
    <property type="term" value="C:autophagosome"/>
    <property type="evidence" value="ECO:0007669"/>
    <property type="project" value="UniProtKB-SubCell"/>
</dbReference>
<dbReference type="GO" id="GO:0005829">
    <property type="term" value="C:cytosol"/>
    <property type="evidence" value="ECO:0000314"/>
    <property type="project" value="MGI"/>
</dbReference>
<dbReference type="GO" id="GO:0071682">
    <property type="term" value="C:endocytic vesicle lumen"/>
    <property type="evidence" value="ECO:0000304"/>
    <property type="project" value="Reactome"/>
</dbReference>
<dbReference type="GO" id="GO:0005576">
    <property type="term" value="C:extracellular region"/>
    <property type="evidence" value="ECO:0000304"/>
    <property type="project" value="Reactome"/>
</dbReference>
<dbReference type="GO" id="GO:0016020">
    <property type="term" value="C:membrane"/>
    <property type="evidence" value="ECO:0000314"/>
    <property type="project" value="MGI"/>
</dbReference>
<dbReference type="GO" id="GO:0005739">
    <property type="term" value="C:mitochondrion"/>
    <property type="evidence" value="ECO:0007005"/>
    <property type="project" value="MGI"/>
</dbReference>
<dbReference type="GO" id="GO:0008199">
    <property type="term" value="F:ferric iron binding"/>
    <property type="evidence" value="ECO:0007669"/>
    <property type="project" value="InterPro"/>
</dbReference>
<dbReference type="GO" id="GO:0004322">
    <property type="term" value="F:ferroxidase activity"/>
    <property type="evidence" value="ECO:0007669"/>
    <property type="project" value="UniProtKB-EC"/>
</dbReference>
<dbReference type="GO" id="GO:0042802">
    <property type="term" value="F:identical protein binding"/>
    <property type="evidence" value="ECO:0000353"/>
    <property type="project" value="IntAct"/>
</dbReference>
<dbReference type="GO" id="GO:0005506">
    <property type="term" value="F:iron ion binding"/>
    <property type="evidence" value="ECO:0000314"/>
    <property type="project" value="MGI"/>
</dbReference>
<dbReference type="GO" id="GO:0006955">
    <property type="term" value="P:immune response"/>
    <property type="evidence" value="ECO:0000250"/>
    <property type="project" value="UniProtKB"/>
</dbReference>
<dbReference type="GO" id="GO:0006879">
    <property type="term" value="P:intracellular iron ion homeostasis"/>
    <property type="evidence" value="ECO:0007669"/>
    <property type="project" value="UniProtKB-KW"/>
</dbReference>
<dbReference type="GO" id="GO:0006826">
    <property type="term" value="P:iron ion transport"/>
    <property type="evidence" value="ECO:0000314"/>
    <property type="project" value="MGI"/>
</dbReference>
<dbReference type="GO" id="GO:0008285">
    <property type="term" value="P:negative regulation of cell population proliferation"/>
    <property type="evidence" value="ECO:0000250"/>
    <property type="project" value="UniProtKB"/>
</dbReference>
<dbReference type="GO" id="GO:0110076">
    <property type="term" value="P:negative regulation of ferroptosis"/>
    <property type="evidence" value="ECO:0000250"/>
    <property type="project" value="UniProtKB"/>
</dbReference>
<dbReference type="CDD" id="cd01056">
    <property type="entry name" value="Euk_Ferritin"/>
    <property type="match status" value="1"/>
</dbReference>
<dbReference type="FunFam" id="1.20.1260.10:FF:000024">
    <property type="entry name" value="Ferritin heavy chain"/>
    <property type="match status" value="1"/>
</dbReference>
<dbReference type="Gene3D" id="1.20.1260.10">
    <property type="match status" value="1"/>
</dbReference>
<dbReference type="InterPro" id="IPR001519">
    <property type="entry name" value="Ferritin"/>
</dbReference>
<dbReference type="InterPro" id="IPR012347">
    <property type="entry name" value="Ferritin-like"/>
</dbReference>
<dbReference type="InterPro" id="IPR009040">
    <property type="entry name" value="Ferritin-like_diiron"/>
</dbReference>
<dbReference type="InterPro" id="IPR009078">
    <property type="entry name" value="Ferritin-like_SF"/>
</dbReference>
<dbReference type="InterPro" id="IPR014034">
    <property type="entry name" value="Ferritin_CS"/>
</dbReference>
<dbReference type="InterPro" id="IPR008331">
    <property type="entry name" value="Ferritin_DPS_dom"/>
</dbReference>
<dbReference type="PANTHER" id="PTHR11431">
    <property type="entry name" value="FERRITIN"/>
    <property type="match status" value="1"/>
</dbReference>
<dbReference type="PANTHER" id="PTHR11431:SF37">
    <property type="entry name" value="FERRITIN HEAVY CHAIN"/>
    <property type="match status" value="1"/>
</dbReference>
<dbReference type="Pfam" id="PF00210">
    <property type="entry name" value="Ferritin"/>
    <property type="match status" value="1"/>
</dbReference>
<dbReference type="SUPFAM" id="SSF47240">
    <property type="entry name" value="Ferritin-like"/>
    <property type="match status" value="1"/>
</dbReference>
<dbReference type="PROSITE" id="PS00540">
    <property type="entry name" value="FERRITIN_1"/>
    <property type="match status" value="1"/>
</dbReference>
<dbReference type="PROSITE" id="PS00204">
    <property type="entry name" value="FERRITIN_2"/>
    <property type="match status" value="1"/>
</dbReference>
<dbReference type="PROSITE" id="PS50905">
    <property type="entry name" value="FERRITIN_LIKE"/>
    <property type="match status" value="1"/>
</dbReference>
<feature type="chain" id="PRO_0000424473" description="Ferritin heavy chain">
    <location>
        <begin position="1"/>
        <end position="182"/>
    </location>
</feature>
<feature type="initiator methionine" description="Removed; alternate" evidence="1">
    <location>
        <position position="1"/>
    </location>
</feature>
<feature type="chain" id="PRO_0000201049" description="Ferritin heavy chain, N-terminally processed">
    <location>
        <begin position="2"/>
        <end position="182"/>
    </location>
</feature>
<feature type="domain" description="Ferritin-like diiron" evidence="2">
    <location>
        <begin position="11"/>
        <end position="160"/>
    </location>
</feature>
<feature type="binding site" evidence="2">
    <location>
        <position position="28"/>
    </location>
    <ligand>
        <name>Fe cation</name>
        <dbReference type="ChEBI" id="CHEBI:24875"/>
        <label>1</label>
    </ligand>
</feature>
<feature type="binding site" evidence="2">
    <location>
        <position position="63"/>
    </location>
    <ligand>
        <name>Fe cation</name>
        <dbReference type="ChEBI" id="CHEBI:24875"/>
        <label>1</label>
    </ligand>
</feature>
<feature type="binding site" evidence="2">
    <location>
        <position position="63"/>
    </location>
    <ligand>
        <name>Fe cation</name>
        <dbReference type="ChEBI" id="CHEBI:24875"/>
        <label>2</label>
    </ligand>
</feature>
<feature type="binding site" evidence="2">
    <location>
        <position position="66"/>
    </location>
    <ligand>
        <name>Fe cation</name>
        <dbReference type="ChEBI" id="CHEBI:24875"/>
        <label>1</label>
    </ligand>
</feature>
<feature type="binding site" evidence="2">
    <location>
        <position position="108"/>
    </location>
    <ligand>
        <name>Fe cation</name>
        <dbReference type="ChEBI" id="CHEBI:24875"/>
        <label>2</label>
    </ligand>
</feature>
<feature type="binding site" evidence="2">
    <location>
        <position position="142"/>
    </location>
    <ligand>
        <name>Fe cation</name>
        <dbReference type="ChEBI" id="CHEBI:24875"/>
        <label>2</label>
    </ligand>
</feature>
<feature type="modified residue" description="N-acetylmethionine" evidence="1">
    <location>
        <position position="1"/>
    </location>
</feature>
<feature type="modified residue" description="N-acetylthreonine; in Ferritin heavy chain, N-terminally processed" evidence="1">
    <location>
        <position position="2"/>
    </location>
</feature>
<feature type="sequence conflict" description="In Ref. 5; AAA37612." evidence="7" ref="5">
    <original>A</original>
    <variation>S</variation>
    <location>
        <position position="17"/>
    </location>
</feature>
<feature type="sequence conflict" description="In Ref. 5; AAA37612." evidence="7" ref="5">
    <original>Y</original>
    <variation>H</variation>
    <location>
        <position position="137"/>
    </location>
</feature>
<feature type="sequence conflict" description="In Ref. 5; AAA37612." evidence="7" ref="5">
    <original>S</original>
    <variation>N</variation>
    <location>
        <position position="140"/>
    </location>
</feature>
<feature type="sequence conflict" description="In Ref. 5; AAA37612." evidence="7" ref="5">
    <original>A</original>
    <variation>S</variation>
    <location>
        <position position="164"/>
    </location>
</feature>
<feature type="helix" evidence="8">
    <location>
        <begin position="15"/>
        <end position="42"/>
    </location>
</feature>
<feature type="turn" evidence="8">
    <location>
        <begin position="45"/>
        <end position="47"/>
    </location>
</feature>
<feature type="helix" evidence="8">
    <location>
        <begin position="50"/>
        <end position="76"/>
    </location>
</feature>
<feature type="helix" evidence="8">
    <location>
        <begin position="97"/>
        <end position="124"/>
    </location>
</feature>
<feature type="helix" evidence="8">
    <location>
        <begin position="128"/>
        <end position="137"/>
    </location>
</feature>
<feature type="helix" evidence="8">
    <location>
        <begin position="139"/>
        <end position="159"/>
    </location>
</feature>
<feature type="turn" evidence="8">
    <location>
        <begin position="160"/>
        <end position="163"/>
    </location>
</feature>
<feature type="helix" evidence="8">
    <location>
        <begin position="166"/>
        <end position="174"/>
    </location>
</feature>
<name>FRIH_MOUSE</name>
<sequence length="182" mass="21067">MTTASPSQVRQNYHQDAEAAINRQINLELYASYVYLSMSCYFDRDDVALKNFAKYFLHQSHEEREHAEKLMKLQNQRGGRIFLQDIKKPDRDDWESGLNAMECALHLEKSVNQSLLELHKLATDKNDPHLCDFIETYYLSEQVKSIKELGDHVTNLRKMGAPEAGMAEYLFDKHTLGHGDES</sequence>
<reference key="1">
    <citation type="journal article" date="1989" name="Nucleic Acids Res.">
        <title>Nucleotide sequence of the mouse ferritin H chain gene.</title>
        <authorList>
            <person name="Yachaou A."/>
            <person name="Renaudie F."/>
            <person name="Grandchamp B."/>
            <person name="Beaumont C."/>
        </authorList>
    </citation>
    <scope>NUCLEOTIDE SEQUENCE</scope>
    <source>
        <strain>BALB/cJ</strain>
    </source>
</reference>
<reference key="2">
    <citation type="journal article" date="1988" name="Nucleic Acids Res.">
        <title>Nucleotide sequence of cDNA encoding the heavy subunit of mouse macrophage ferritin.</title>
        <authorList>
            <person name="Miyazaki Y."/>
            <person name="Setoguchi M."/>
            <person name="Higuchi Y."/>
            <person name="Yoshida S."/>
            <person name="Akizuki S."/>
            <person name="Yamamoto S."/>
        </authorList>
    </citation>
    <scope>NUCLEOTIDE SEQUENCE [MRNA]</scope>
    <source>
        <strain>ICR</strain>
        <tissue>Macrophage</tissue>
    </source>
</reference>
<reference key="3">
    <citation type="journal article" date="1988" name="J. Biol. Chem.">
        <title>The molecular cloning and characterization of murine ferritin heavy chain, a tumor necrosis factor-inducible gene.</title>
        <authorList>
            <person name="Torti S.V."/>
            <person name="Kwak E.L."/>
            <person name="Miller S.C."/>
            <person name="Miller L.L."/>
            <person name="Ringold G.M."/>
            <person name="Myambo K.B."/>
            <person name="Young A.P."/>
            <person name="Torti F.M."/>
        </authorList>
    </citation>
    <scope>NUCLEOTIDE SEQUENCE [MRNA]</scope>
</reference>
<reference key="4">
    <citation type="journal article" date="1990" name="Gene">
        <title>Murine ferritin heavy chain: isolation and characterization of a functional gene.</title>
        <authorList>
            <person name="Kwak E.L."/>
            <person name="Torti S.V."/>
            <person name="Torti F.M."/>
        </authorList>
    </citation>
    <scope>NUCLEOTIDE SEQUENCE</scope>
</reference>
<reference key="5">
    <citation type="journal article" date="1989" name="J. Biol. Chem.">
        <title>Transcriptional regulation of ferritin H and L subunits in adult erythroid and liver cells from the mouse. Unambiguous identification of mouse ferritin subunits and in vitro formation of the ferritin shells.</title>
        <authorList>
            <person name="Beaumont C."/>
            <person name="Dugast I."/>
            <person name="Renaudie F."/>
            <person name="Souroujon M."/>
            <person name="Grandchamp B."/>
        </authorList>
    </citation>
    <scope>NUCLEOTIDE SEQUENCE [MRNA]</scope>
</reference>
<reference key="6">
    <citation type="journal article" date="2005" name="Science">
        <title>The transcriptional landscape of the mammalian genome.</title>
        <authorList>
            <person name="Carninci P."/>
            <person name="Kasukawa T."/>
            <person name="Katayama S."/>
            <person name="Gough J."/>
            <person name="Frith M.C."/>
            <person name="Maeda N."/>
            <person name="Oyama R."/>
            <person name="Ravasi T."/>
            <person name="Lenhard B."/>
            <person name="Wells C."/>
            <person name="Kodzius R."/>
            <person name="Shimokawa K."/>
            <person name="Bajic V.B."/>
            <person name="Brenner S.E."/>
            <person name="Batalov S."/>
            <person name="Forrest A.R."/>
            <person name="Zavolan M."/>
            <person name="Davis M.J."/>
            <person name="Wilming L.G."/>
            <person name="Aidinis V."/>
            <person name="Allen J.E."/>
            <person name="Ambesi-Impiombato A."/>
            <person name="Apweiler R."/>
            <person name="Aturaliya R.N."/>
            <person name="Bailey T.L."/>
            <person name="Bansal M."/>
            <person name="Baxter L."/>
            <person name="Beisel K.W."/>
            <person name="Bersano T."/>
            <person name="Bono H."/>
            <person name="Chalk A.M."/>
            <person name="Chiu K.P."/>
            <person name="Choudhary V."/>
            <person name="Christoffels A."/>
            <person name="Clutterbuck D.R."/>
            <person name="Crowe M.L."/>
            <person name="Dalla E."/>
            <person name="Dalrymple B.P."/>
            <person name="de Bono B."/>
            <person name="Della Gatta G."/>
            <person name="di Bernardo D."/>
            <person name="Down T."/>
            <person name="Engstrom P."/>
            <person name="Fagiolini M."/>
            <person name="Faulkner G."/>
            <person name="Fletcher C.F."/>
            <person name="Fukushima T."/>
            <person name="Furuno M."/>
            <person name="Futaki S."/>
            <person name="Gariboldi M."/>
            <person name="Georgii-Hemming P."/>
            <person name="Gingeras T.R."/>
            <person name="Gojobori T."/>
            <person name="Green R.E."/>
            <person name="Gustincich S."/>
            <person name="Harbers M."/>
            <person name="Hayashi Y."/>
            <person name="Hensch T.K."/>
            <person name="Hirokawa N."/>
            <person name="Hill D."/>
            <person name="Huminiecki L."/>
            <person name="Iacono M."/>
            <person name="Ikeo K."/>
            <person name="Iwama A."/>
            <person name="Ishikawa T."/>
            <person name="Jakt M."/>
            <person name="Kanapin A."/>
            <person name="Katoh M."/>
            <person name="Kawasawa Y."/>
            <person name="Kelso J."/>
            <person name="Kitamura H."/>
            <person name="Kitano H."/>
            <person name="Kollias G."/>
            <person name="Krishnan S.P."/>
            <person name="Kruger A."/>
            <person name="Kummerfeld S.K."/>
            <person name="Kurochkin I.V."/>
            <person name="Lareau L.F."/>
            <person name="Lazarevic D."/>
            <person name="Lipovich L."/>
            <person name="Liu J."/>
            <person name="Liuni S."/>
            <person name="McWilliam S."/>
            <person name="Madan Babu M."/>
            <person name="Madera M."/>
            <person name="Marchionni L."/>
            <person name="Matsuda H."/>
            <person name="Matsuzawa S."/>
            <person name="Miki H."/>
            <person name="Mignone F."/>
            <person name="Miyake S."/>
            <person name="Morris K."/>
            <person name="Mottagui-Tabar S."/>
            <person name="Mulder N."/>
            <person name="Nakano N."/>
            <person name="Nakauchi H."/>
            <person name="Ng P."/>
            <person name="Nilsson R."/>
            <person name="Nishiguchi S."/>
            <person name="Nishikawa S."/>
            <person name="Nori F."/>
            <person name="Ohara O."/>
            <person name="Okazaki Y."/>
            <person name="Orlando V."/>
            <person name="Pang K.C."/>
            <person name="Pavan W.J."/>
            <person name="Pavesi G."/>
            <person name="Pesole G."/>
            <person name="Petrovsky N."/>
            <person name="Piazza S."/>
            <person name="Reed J."/>
            <person name="Reid J.F."/>
            <person name="Ring B.Z."/>
            <person name="Ringwald M."/>
            <person name="Rost B."/>
            <person name="Ruan Y."/>
            <person name="Salzberg S.L."/>
            <person name="Sandelin A."/>
            <person name="Schneider C."/>
            <person name="Schoenbach C."/>
            <person name="Sekiguchi K."/>
            <person name="Semple C.A."/>
            <person name="Seno S."/>
            <person name="Sessa L."/>
            <person name="Sheng Y."/>
            <person name="Shibata Y."/>
            <person name="Shimada H."/>
            <person name="Shimada K."/>
            <person name="Silva D."/>
            <person name="Sinclair B."/>
            <person name="Sperling S."/>
            <person name="Stupka E."/>
            <person name="Sugiura K."/>
            <person name="Sultana R."/>
            <person name="Takenaka Y."/>
            <person name="Taki K."/>
            <person name="Tammoja K."/>
            <person name="Tan S.L."/>
            <person name="Tang S."/>
            <person name="Taylor M.S."/>
            <person name="Tegner J."/>
            <person name="Teichmann S.A."/>
            <person name="Ueda H.R."/>
            <person name="van Nimwegen E."/>
            <person name="Verardo R."/>
            <person name="Wei C.L."/>
            <person name="Yagi K."/>
            <person name="Yamanishi H."/>
            <person name="Zabarovsky E."/>
            <person name="Zhu S."/>
            <person name="Zimmer A."/>
            <person name="Hide W."/>
            <person name="Bult C."/>
            <person name="Grimmond S.M."/>
            <person name="Teasdale R.D."/>
            <person name="Liu E.T."/>
            <person name="Brusic V."/>
            <person name="Quackenbush J."/>
            <person name="Wahlestedt C."/>
            <person name="Mattick J.S."/>
            <person name="Hume D.A."/>
            <person name="Kai C."/>
            <person name="Sasaki D."/>
            <person name="Tomaru Y."/>
            <person name="Fukuda S."/>
            <person name="Kanamori-Katayama M."/>
            <person name="Suzuki M."/>
            <person name="Aoki J."/>
            <person name="Arakawa T."/>
            <person name="Iida J."/>
            <person name="Imamura K."/>
            <person name="Itoh M."/>
            <person name="Kato T."/>
            <person name="Kawaji H."/>
            <person name="Kawagashira N."/>
            <person name="Kawashima T."/>
            <person name="Kojima M."/>
            <person name="Kondo S."/>
            <person name="Konno H."/>
            <person name="Nakano K."/>
            <person name="Ninomiya N."/>
            <person name="Nishio T."/>
            <person name="Okada M."/>
            <person name="Plessy C."/>
            <person name="Shibata K."/>
            <person name="Shiraki T."/>
            <person name="Suzuki S."/>
            <person name="Tagami M."/>
            <person name="Waki K."/>
            <person name="Watahiki A."/>
            <person name="Okamura-Oho Y."/>
            <person name="Suzuki H."/>
            <person name="Kawai J."/>
            <person name="Hayashizaki Y."/>
        </authorList>
    </citation>
    <scope>NUCLEOTIDE SEQUENCE [LARGE SCALE MRNA]</scope>
    <source>
        <strain>C57BL/6J</strain>
        <tissue>Amnion</tissue>
        <tissue>Heart</tissue>
        <tissue>Kidney</tissue>
    </source>
</reference>
<reference key="7">
    <citation type="journal article" date="2004" name="Genome Res.">
        <title>The status, quality, and expansion of the NIH full-length cDNA project: the Mammalian Gene Collection (MGC).</title>
        <authorList>
            <consortium name="The MGC Project Team"/>
        </authorList>
    </citation>
    <scope>NUCLEOTIDE SEQUENCE [LARGE SCALE MRNA]</scope>
    <source>
        <strain>C57BL/6J</strain>
        <tissue>Mammary tumor</tissue>
    </source>
</reference>
<reference key="8">
    <citation type="submission" date="2007-03" db="UniProtKB">
        <authorList>
            <person name="Lubec G."/>
            <person name="Klug S."/>
        </authorList>
    </citation>
    <scope>PROTEIN SEQUENCE OF 11-23 AND 55-64</scope>
    <scope>IDENTIFICATION BY MASS SPECTROMETRY</scope>
    <source>
        <tissue>Hippocampus</tissue>
    </source>
</reference>
<reference key="9">
    <citation type="journal article" date="2000" name="J. Biol. Chem.">
        <title>Early embryonic lethality of H ferritin gene deletion in mice.</title>
        <authorList>
            <person name="Ferreira C."/>
            <person name="Bucchini D."/>
            <person name="Martin M.E."/>
            <person name="Levi S."/>
            <person name="Arosio P."/>
            <person name="Grandchamp B."/>
            <person name="Beaumont C."/>
        </authorList>
    </citation>
    <scope>DISRUPTION PHENOTYPE</scope>
    <scope>DEVELOPMENTAL STAGE</scope>
</reference>
<reference key="10">
    <citation type="journal article" date="2001" name="Blood">
        <title>H ferritin knockout mice: a model of hyperferritinemia in the absence of iron overload.</title>
        <authorList>
            <person name="Ferreira C."/>
            <person name="Santambrogio P."/>
            <person name="Martin M.E."/>
            <person name="Andrieu V."/>
            <person name="Feldmann G."/>
            <person name="Henin D."/>
            <person name="Beaumont C."/>
        </authorList>
    </citation>
    <scope>DISRUPTION PHENOTYPE</scope>
</reference>
<reference key="11">
    <citation type="journal article" date="2009" name="Dev. Cell">
        <title>Scara5 is a ferritin receptor mediating non-transferrin iron delivery.</title>
        <authorList>
            <person name="Li J.Y."/>
            <person name="Paragas N."/>
            <person name="Ned R.M."/>
            <person name="Qiu A."/>
            <person name="Viltard M."/>
            <person name="Leete T."/>
            <person name="Drexler I.R."/>
            <person name="Chen X."/>
            <person name="Sanna-Cherchi S."/>
            <person name="Mohammed F."/>
            <person name="Williams D."/>
            <person name="Lin C.S."/>
            <person name="Schmidt-Ott K.M."/>
            <person name="Andrews N.C."/>
            <person name="Barasch J."/>
        </authorList>
    </citation>
    <scope>FUNCTION</scope>
</reference>
<reference key="12">
    <citation type="journal article" date="2010" name="Cell">
        <title>A tissue-specific atlas of mouse protein phosphorylation and expression.</title>
        <authorList>
            <person name="Huttlin E.L."/>
            <person name="Jedrychowski M.P."/>
            <person name="Elias J.E."/>
            <person name="Goswami T."/>
            <person name="Rad R."/>
            <person name="Beausoleil S.A."/>
            <person name="Villen J."/>
            <person name="Haas W."/>
            <person name="Sowa M.E."/>
            <person name="Gygi S.P."/>
        </authorList>
    </citation>
    <scope>IDENTIFICATION BY MASS SPECTROMETRY [LARGE SCALE ANALYSIS]</scope>
    <source>
        <tissue>Brain</tissue>
        <tissue>Brown adipose tissue</tissue>
        <tissue>Heart</tissue>
        <tissue>Kidney</tissue>
        <tissue>Liver</tissue>
        <tissue>Lung</tissue>
        <tissue>Pancreas</tissue>
        <tissue>Spleen</tissue>
        <tissue>Testis</tissue>
    </source>
</reference>
<reference key="13">
    <citation type="journal article" date="2014" name="Nat. Cell Biol.">
        <title>Selective VPS34 inhibitor blocks autophagy and uncovers a role for NCOA4 in ferritin degradation and iron homeostasis in vivo.</title>
        <authorList>
            <person name="Dowdle W.E."/>
            <person name="Nyfeler B."/>
            <person name="Nagel J."/>
            <person name="Elling R.A."/>
            <person name="Liu S."/>
            <person name="Triantafellow E."/>
            <person name="Menon S."/>
            <person name="Wang Z."/>
            <person name="Honda A."/>
            <person name="Pardee G."/>
            <person name="Cantwell J."/>
            <person name="Luu C."/>
            <person name="Cornella-Taracido I."/>
            <person name="Harrington E."/>
            <person name="Fekkes P."/>
            <person name="Lei H."/>
            <person name="Fang Q."/>
            <person name="Digan M.E."/>
            <person name="Burdick D."/>
            <person name="Powers A.F."/>
            <person name="Helliwell S.B."/>
            <person name="D'Aquin S."/>
            <person name="Bastien J."/>
            <person name="Wang H."/>
            <person name="Wiederschain D."/>
            <person name="Kuerth J."/>
            <person name="Bergman P."/>
            <person name="Schwalb D."/>
            <person name="Thomas J."/>
            <person name="Ugwonali S."/>
            <person name="Harbinski F."/>
            <person name="Tallarico J."/>
            <person name="Wilson C.J."/>
            <person name="Myer V.E."/>
            <person name="Porter J.A."/>
            <person name="Bussiere D.E."/>
            <person name="Finan P.M."/>
            <person name="Labow M.A."/>
            <person name="Mao X."/>
            <person name="Hamann L.G."/>
            <person name="Manning B.D."/>
            <person name="Valdez R.A."/>
            <person name="Nicholson T."/>
            <person name="Schirle M."/>
            <person name="Knapp M.S."/>
            <person name="Keaney E.P."/>
            <person name="Murphy L.O."/>
        </authorList>
    </citation>
    <scope>FUNCTION</scope>
    <scope>INTERACTION WITH NCOA4</scope>
    <scope>SUBCELLULAR LOCATION</scope>
</reference>
<evidence type="ECO:0000250" key="1">
    <source>
        <dbReference type="UniProtKB" id="P02794"/>
    </source>
</evidence>
<evidence type="ECO:0000255" key="2">
    <source>
        <dbReference type="PROSITE-ProRule" id="PRU00085"/>
    </source>
</evidence>
<evidence type="ECO:0000269" key="3">
    <source>
    </source>
</evidence>
<evidence type="ECO:0000269" key="4">
    <source>
    </source>
</evidence>
<evidence type="ECO:0000269" key="5">
    <source>
    </source>
</evidence>
<evidence type="ECO:0000269" key="6">
    <source>
    </source>
</evidence>
<evidence type="ECO:0000305" key="7"/>
<evidence type="ECO:0007829" key="8">
    <source>
        <dbReference type="PDB" id="8RQB"/>
    </source>
</evidence>
<keyword id="KW-0002">3D-structure</keyword>
<keyword id="KW-0007">Acetylation</keyword>
<keyword id="KW-0963">Cytoplasm</keyword>
<keyword id="KW-0968">Cytoplasmic vesicle</keyword>
<keyword id="KW-0903">Direct protein sequencing</keyword>
<keyword id="KW-0408">Iron</keyword>
<keyword id="KW-0409">Iron storage</keyword>
<keyword id="KW-0458">Lysosome</keyword>
<keyword id="KW-0479">Metal-binding</keyword>
<keyword id="KW-0560">Oxidoreductase</keyword>
<keyword id="KW-1185">Reference proteome</keyword>
<accession>P09528</accession>
<accession>Q3UI44</accession>
<protein>
    <recommendedName>
        <fullName>Ferritin heavy chain</fullName>
        <shortName>Ferritin H subunit</shortName>
        <ecNumber evidence="1">1.16.3.1</ecNumber>
    </recommendedName>
    <component>
        <recommendedName>
            <fullName>Ferritin heavy chain, N-terminally processed</fullName>
        </recommendedName>
    </component>
</protein>
<gene>
    <name type="primary">Fth1</name>
    <name type="synonym">Fth</name>
</gene>